<reference key="1">
    <citation type="journal article" date="2002" name="Nature">
        <title>Genome sequence of the plant pathogen Ralstonia solanacearum.</title>
        <authorList>
            <person name="Salanoubat M."/>
            <person name="Genin S."/>
            <person name="Artiguenave F."/>
            <person name="Gouzy J."/>
            <person name="Mangenot S."/>
            <person name="Arlat M."/>
            <person name="Billault A."/>
            <person name="Brottier P."/>
            <person name="Camus J.-C."/>
            <person name="Cattolico L."/>
            <person name="Chandler M."/>
            <person name="Choisne N."/>
            <person name="Claudel-Renard C."/>
            <person name="Cunnac S."/>
            <person name="Demange N."/>
            <person name="Gaspin C."/>
            <person name="Lavie M."/>
            <person name="Moisan A."/>
            <person name="Robert C."/>
            <person name="Saurin W."/>
            <person name="Schiex T."/>
            <person name="Siguier P."/>
            <person name="Thebault P."/>
            <person name="Whalen M."/>
            <person name="Wincker P."/>
            <person name="Levy M."/>
            <person name="Weissenbach J."/>
            <person name="Boucher C.A."/>
        </authorList>
    </citation>
    <scope>NUCLEOTIDE SEQUENCE [LARGE SCALE GENOMIC DNA]</scope>
    <source>
        <strain>ATCC BAA-1114 / GMI1000</strain>
    </source>
</reference>
<protein>
    <recommendedName>
        <fullName evidence="1">ATP-dependent Clp protease ATP-binding subunit ClpX</fullName>
    </recommendedName>
</protein>
<sequence>MADKKGSTGEKLLYCSFCGKSQHEVKKLIAGPSVFICDECIDLCNEIIRDEAAISEKEGGLAVKSDLPTPHEIRQSLDQYVIGQEQAKKILAVAVYNHYKRLKHLGKKDDVELSKSNILLIGPTGSGKTLLAQTLARLLNVPFVIADATTLTEAGYVGEDVENIIQKLLQNCNYEVDKAQRGIVYIDEIDKISRKSDNPSITRDVSGEGVQQALLKLIEGTMASVPPQGGRKHPNQDFLQVDTTNILFICGGAFDGLEKIITQRSDKSGIGFGAEVKSKEERDVNEVLPQVEPEDLIKFGLIPELIGRLPVVATLAKLDEAALMEILVEPKNAIVKQYQKLLAMEGVELEIRPSALTAIARKAIKRKTGARGLRSIVEHALMDVMYDLPNHKGVQKVVIDESTIAGDGKPLLMYEEQPKVAGSN</sequence>
<accession>Q8XYP6</accession>
<feature type="chain" id="PRO_0000160407" description="ATP-dependent Clp protease ATP-binding subunit ClpX">
    <location>
        <begin position="1"/>
        <end position="424"/>
    </location>
</feature>
<feature type="domain" description="ClpX-type ZB" evidence="2">
    <location>
        <begin position="3"/>
        <end position="56"/>
    </location>
</feature>
<feature type="binding site" evidence="2">
    <location>
        <position position="15"/>
    </location>
    <ligand>
        <name>Zn(2+)</name>
        <dbReference type="ChEBI" id="CHEBI:29105"/>
    </ligand>
</feature>
<feature type="binding site" evidence="2">
    <location>
        <position position="18"/>
    </location>
    <ligand>
        <name>Zn(2+)</name>
        <dbReference type="ChEBI" id="CHEBI:29105"/>
    </ligand>
</feature>
<feature type="binding site" evidence="2">
    <location>
        <position position="37"/>
    </location>
    <ligand>
        <name>Zn(2+)</name>
        <dbReference type="ChEBI" id="CHEBI:29105"/>
    </ligand>
</feature>
<feature type="binding site" evidence="2">
    <location>
        <position position="40"/>
    </location>
    <ligand>
        <name>Zn(2+)</name>
        <dbReference type="ChEBI" id="CHEBI:29105"/>
    </ligand>
</feature>
<feature type="binding site" evidence="1">
    <location>
        <begin position="123"/>
        <end position="130"/>
    </location>
    <ligand>
        <name>ATP</name>
        <dbReference type="ChEBI" id="CHEBI:30616"/>
    </ligand>
</feature>
<gene>
    <name evidence="1" type="primary">clpX</name>
    <name type="ordered locus">RSc1712</name>
    <name type="ORF">RS02902</name>
</gene>
<proteinExistence type="inferred from homology"/>
<dbReference type="EMBL" id="AL646052">
    <property type="protein sequence ID" value="CAD15414.1"/>
    <property type="molecule type" value="Genomic_DNA"/>
</dbReference>
<dbReference type="RefSeq" id="WP_011001652.1">
    <property type="nucleotide sequence ID" value="NC_003295.1"/>
</dbReference>
<dbReference type="SMR" id="Q8XYP6"/>
<dbReference type="STRING" id="267608.RSc1712"/>
<dbReference type="EnsemblBacteria" id="CAD15414">
    <property type="protein sequence ID" value="CAD15414"/>
    <property type="gene ID" value="RSc1712"/>
</dbReference>
<dbReference type="KEGG" id="rso:RSc1712"/>
<dbReference type="eggNOG" id="COG1219">
    <property type="taxonomic scope" value="Bacteria"/>
</dbReference>
<dbReference type="HOGENOM" id="CLU_014218_8_2_4"/>
<dbReference type="Proteomes" id="UP000001436">
    <property type="component" value="Chromosome"/>
</dbReference>
<dbReference type="GO" id="GO:0009376">
    <property type="term" value="C:HslUV protease complex"/>
    <property type="evidence" value="ECO:0007669"/>
    <property type="project" value="TreeGrafter"/>
</dbReference>
<dbReference type="GO" id="GO:0005524">
    <property type="term" value="F:ATP binding"/>
    <property type="evidence" value="ECO:0007669"/>
    <property type="project" value="UniProtKB-UniRule"/>
</dbReference>
<dbReference type="GO" id="GO:0016887">
    <property type="term" value="F:ATP hydrolysis activity"/>
    <property type="evidence" value="ECO:0007669"/>
    <property type="project" value="InterPro"/>
</dbReference>
<dbReference type="GO" id="GO:0140662">
    <property type="term" value="F:ATP-dependent protein folding chaperone"/>
    <property type="evidence" value="ECO:0007669"/>
    <property type="project" value="InterPro"/>
</dbReference>
<dbReference type="GO" id="GO:0046983">
    <property type="term" value="F:protein dimerization activity"/>
    <property type="evidence" value="ECO:0007669"/>
    <property type="project" value="InterPro"/>
</dbReference>
<dbReference type="GO" id="GO:0051082">
    <property type="term" value="F:unfolded protein binding"/>
    <property type="evidence" value="ECO:0007669"/>
    <property type="project" value="UniProtKB-UniRule"/>
</dbReference>
<dbReference type="GO" id="GO:0008270">
    <property type="term" value="F:zinc ion binding"/>
    <property type="evidence" value="ECO:0007669"/>
    <property type="project" value="InterPro"/>
</dbReference>
<dbReference type="GO" id="GO:0051301">
    <property type="term" value="P:cell division"/>
    <property type="evidence" value="ECO:0007669"/>
    <property type="project" value="TreeGrafter"/>
</dbReference>
<dbReference type="GO" id="GO:0051603">
    <property type="term" value="P:proteolysis involved in protein catabolic process"/>
    <property type="evidence" value="ECO:0007669"/>
    <property type="project" value="TreeGrafter"/>
</dbReference>
<dbReference type="CDD" id="cd19497">
    <property type="entry name" value="RecA-like_ClpX"/>
    <property type="match status" value="1"/>
</dbReference>
<dbReference type="FunFam" id="1.10.8.60:FF:000002">
    <property type="entry name" value="ATP-dependent Clp protease ATP-binding subunit ClpX"/>
    <property type="match status" value="1"/>
</dbReference>
<dbReference type="FunFam" id="3.40.50.300:FF:000005">
    <property type="entry name" value="ATP-dependent Clp protease ATP-binding subunit ClpX"/>
    <property type="match status" value="1"/>
</dbReference>
<dbReference type="Gene3D" id="1.10.8.60">
    <property type="match status" value="1"/>
</dbReference>
<dbReference type="Gene3D" id="6.20.220.10">
    <property type="entry name" value="ClpX chaperone, C4-type zinc finger domain"/>
    <property type="match status" value="1"/>
</dbReference>
<dbReference type="Gene3D" id="3.40.50.300">
    <property type="entry name" value="P-loop containing nucleotide triphosphate hydrolases"/>
    <property type="match status" value="1"/>
</dbReference>
<dbReference type="HAMAP" id="MF_00175">
    <property type="entry name" value="ClpX"/>
    <property type="match status" value="1"/>
</dbReference>
<dbReference type="InterPro" id="IPR003593">
    <property type="entry name" value="AAA+_ATPase"/>
</dbReference>
<dbReference type="InterPro" id="IPR050052">
    <property type="entry name" value="ATP-dep_Clp_protease_ClpX"/>
</dbReference>
<dbReference type="InterPro" id="IPR003959">
    <property type="entry name" value="ATPase_AAA_core"/>
</dbReference>
<dbReference type="InterPro" id="IPR019489">
    <property type="entry name" value="Clp_ATPase_C"/>
</dbReference>
<dbReference type="InterPro" id="IPR004487">
    <property type="entry name" value="Clp_protease_ATP-bd_su_ClpX"/>
</dbReference>
<dbReference type="InterPro" id="IPR046425">
    <property type="entry name" value="ClpX_bact"/>
</dbReference>
<dbReference type="InterPro" id="IPR027417">
    <property type="entry name" value="P-loop_NTPase"/>
</dbReference>
<dbReference type="InterPro" id="IPR010603">
    <property type="entry name" value="Znf_CppX_C4"/>
</dbReference>
<dbReference type="InterPro" id="IPR038366">
    <property type="entry name" value="Znf_CppX_C4_sf"/>
</dbReference>
<dbReference type="NCBIfam" id="TIGR00382">
    <property type="entry name" value="clpX"/>
    <property type="match status" value="1"/>
</dbReference>
<dbReference type="NCBIfam" id="NF003745">
    <property type="entry name" value="PRK05342.1"/>
    <property type="match status" value="1"/>
</dbReference>
<dbReference type="PANTHER" id="PTHR48102:SF7">
    <property type="entry name" value="ATP-DEPENDENT CLP PROTEASE ATP-BINDING SUBUNIT CLPX-LIKE, MITOCHONDRIAL"/>
    <property type="match status" value="1"/>
</dbReference>
<dbReference type="PANTHER" id="PTHR48102">
    <property type="entry name" value="ATP-DEPENDENT CLP PROTEASE ATP-BINDING SUBUNIT CLPX-LIKE, MITOCHONDRIAL-RELATED"/>
    <property type="match status" value="1"/>
</dbReference>
<dbReference type="Pfam" id="PF07724">
    <property type="entry name" value="AAA_2"/>
    <property type="match status" value="1"/>
</dbReference>
<dbReference type="Pfam" id="PF10431">
    <property type="entry name" value="ClpB_D2-small"/>
    <property type="match status" value="1"/>
</dbReference>
<dbReference type="Pfam" id="PF06689">
    <property type="entry name" value="zf-C4_ClpX"/>
    <property type="match status" value="1"/>
</dbReference>
<dbReference type="SMART" id="SM00382">
    <property type="entry name" value="AAA"/>
    <property type="match status" value="1"/>
</dbReference>
<dbReference type="SMART" id="SM01086">
    <property type="entry name" value="ClpB_D2-small"/>
    <property type="match status" value="1"/>
</dbReference>
<dbReference type="SMART" id="SM00994">
    <property type="entry name" value="zf-C4_ClpX"/>
    <property type="match status" value="1"/>
</dbReference>
<dbReference type="SUPFAM" id="SSF57716">
    <property type="entry name" value="Glucocorticoid receptor-like (DNA-binding domain)"/>
    <property type="match status" value="1"/>
</dbReference>
<dbReference type="SUPFAM" id="SSF52540">
    <property type="entry name" value="P-loop containing nucleoside triphosphate hydrolases"/>
    <property type="match status" value="1"/>
</dbReference>
<dbReference type="PROSITE" id="PS51902">
    <property type="entry name" value="CLPX_ZB"/>
    <property type="match status" value="1"/>
</dbReference>
<evidence type="ECO:0000255" key="1">
    <source>
        <dbReference type="HAMAP-Rule" id="MF_00175"/>
    </source>
</evidence>
<evidence type="ECO:0000255" key="2">
    <source>
        <dbReference type="PROSITE-ProRule" id="PRU01250"/>
    </source>
</evidence>
<keyword id="KW-0067">ATP-binding</keyword>
<keyword id="KW-0143">Chaperone</keyword>
<keyword id="KW-0479">Metal-binding</keyword>
<keyword id="KW-0547">Nucleotide-binding</keyword>
<keyword id="KW-1185">Reference proteome</keyword>
<keyword id="KW-0862">Zinc</keyword>
<name>CLPX_RALN1</name>
<organism>
    <name type="scientific">Ralstonia nicotianae (strain ATCC BAA-1114 / GMI1000)</name>
    <name type="common">Ralstonia solanacearum</name>
    <dbReference type="NCBI Taxonomy" id="267608"/>
    <lineage>
        <taxon>Bacteria</taxon>
        <taxon>Pseudomonadati</taxon>
        <taxon>Pseudomonadota</taxon>
        <taxon>Betaproteobacteria</taxon>
        <taxon>Burkholderiales</taxon>
        <taxon>Burkholderiaceae</taxon>
        <taxon>Ralstonia</taxon>
        <taxon>Ralstonia solanacearum species complex</taxon>
    </lineage>
</organism>
<comment type="function">
    <text evidence="1">ATP-dependent specificity component of the Clp protease. It directs the protease to specific substrates. Can perform chaperone functions in the absence of ClpP.</text>
</comment>
<comment type="subunit">
    <text evidence="1">Component of the ClpX-ClpP complex. Forms a hexameric ring that, in the presence of ATP, binds to fourteen ClpP subunits assembled into a disk-like structure with a central cavity, resembling the structure of eukaryotic proteasomes.</text>
</comment>
<comment type="similarity">
    <text evidence="1">Belongs to the ClpX chaperone family.</text>
</comment>